<name>RNH2_CERS5</name>
<accession>A4WNL5</accession>
<sequence>MEIACPDWSHESAAFAEGFTCIVGVDEVGRGPLAGPVTAAAVRLFPGRIPEGLNDSKKLPAARREALAAEILAVAEVSVAHASVEEIDRLNILQASHLAMARALAGLPCPPDFALIDGHLIPKGLAHRCRAIVKGDALCLSIAAASIVAKVARDRIMVDLEQQHPGYGWRTNAGYGTRDHLQALLNLGLTPHHRRSFKPVHNILYQEASVSP</sequence>
<evidence type="ECO:0000255" key="1">
    <source>
        <dbReference type="HAMAP-Rule" id="MF_00052"/>
    </source>
</evidence>
<evidence type="ECO:0000255" key="2">
    <source>
        <dbReference type="PROSITE-ProRule" id="PRU01319"/>
    </source>
</evidence>
<reference key="1">
    <citation type="submission" date="2007-04" db="EMBL/GenBank/DDBJ databases">
        <title>Complete sequence of chromosome of Rhodobacter sphaeroides ATCC 17025.</title>
        <authorList>
            <consortium name="US DOE Joint Genome Institute"/>
            <person name="Copeland A."/>
            <person name="Lucas S."/>
            <person name="Lapidus A."/>
            <person name="Barry K."/>
            <person name="Detter J.C."/>
            <person name="Glavina del Rio T."/>
            <person name="Hammon N."/>
            <person name="Israni S."/>
            <person name="Dalin E."/>
            <person name="Tice H."/>
            <person name="Pitluck S."/>
            <person name="Chertkov O."/>
            <person name="Brettin T."/>
            <person name="Bruce D."/>
            <person name="Han C."/>
            <person name="Schmutz J."/>
            <person name="Larimer F."/>
            <person name="Land M."/>
            <person name="Hauser L."/>
            <person name="Kyrpides N."/>
            <person name="Kim E."/>
            <person name="Richardson P."/>
            <person name="Mackenzie C."/>
            <person name="Choudhary M."/>
            <person name="Donohue T.J."/>
            <person name="Kaplan S."/>
        </authorList>
    </citation>
    <scope>NUCLEOTIDE SEQUENCE [LARGE SCALE GENOMIC DNA]</scope>
    <source>
        <strain>ATCC 17025 / ATH 2.4.3</strain>
    </source>
</reference>
<protein>
    <recommendedName>
        <fullName evidence="1">Ribonuclease HII</fullName>
        <shortName evidence="1">RNase HII</shortName>
        <ecNumber evidence="1">3.1.26.4</ecNumber>
    </recommendedName>
</protein>
<proteinExistence type="inferred from homology"/>
<keyword id="KW-0963">Cytoplasm</keyword>
<keyword id="KW-0255">Endonuclease</keyword>
<keyword id="KW-0378">Hydrolase</keyword>
<keyword id="KW-0464">Manganese</keyword>
<keyword id="KW-0479">Metal-binding</keyword>
<keyword id="KW-0540">Nuclease</keyword>
<comment type="function">
    <text evidence="1">Endonuclease that specifically degrades the RNA of RNA-DNA hybrids.</text>
</comment>
<comment type="catalytic activity">
    <reaction evidence="1">
        <text>Endonucleolytic cleavage to 5'-phosphomonoester.</text>
        <dbReference type="EC" id="3.1.26.4"/>
    </reaction>
</comment>
<comment type="cofactor">
    <cofactor evidence="1">
        <name>Mn(2+)</name>
        <dbReference type="ChEBI" id="CHEBI:29035"/>
    </cofactor>
    <cofactor evidence="1">
        <name>Mg(2+)</name>
        <dbReference type="ChEBI" id="CHEBI:18420"/>
    </cofactor>
    <text evidence="1">Manganese or magnesium. Binds 1 divalent metal ion per monomer in the absence of substrate. May bind a second metal ion after substrate binding.</text>
</comment>
<comment type="subcellular location">
    <subcellularLocation>
        <location evidence="1">Cytoplasm</location>
    </subcellularLocation>
</comment>
<comment type="similarity">
    <text evidence="1">Belongs to the RNase HII family.</text>
</comment>
<dbReference type="EC" id="3.1.26.4" evidence="1"/>
<dbReference type="EMBL" id="CP000661">
    <property type="protein sequence ID" value="ABP68979.1"/>
    <property type="molecule type" value="Genomic_DNA"/>
</dbReference>
<dbReference type="SMR" id="A4WNL5"/>
<dbReference type="STRING" id="349102.Rsph17025_0067"/>
<dbReference type="KEGG" id="rsq:Rsph17025_0067"/>
<dbReference type="eggNOG" id="COG0164">
    <property type="taxonomic scope" value="Bacteria"/>
</dbReference>
<dbReference type="HOGENOM" id="CLU_036532_3_2_5"/>
<dbReference type="BioCyc" id="RSPH349102:G1G8M-66-MONOMER"/>
<dbReference type="GO" id="GO:0005737">
    <property type="term" value="C:cytoplasm"/>
    <property type="evidence" value="ECO:0007669"/>
    <property type="project" value="UniProtKB-SubCell"/>
</dbReference>
<dbReference type="GO" id="GO:0032299">
    <property type="term" value="C:ribonuclease H2 complex"/>
    <property type="evidence" value="ECO:0007669"/>
    <property type="project" value="TreeGrafter"/>
</dbReference>
<dbReference type="GO" id="GO:0030145">
    <property type="term" value="F:manganese ion binding"/>
    <property type="evidence" value="ECO:0007669"/>
    <property type="project" value="UniProtKB-UniRule"/>
</dbReference>
<dbReference type="GO" id="GO:0003723">
    <property type="term" value="F:RNA binding"/>
    <property type="evidence" value="ECO:0007669"/>
    <property type="project" value="InterPro"/>
</dbReference>
<dbReference type="GO" id="GO:0004523">
    <property type="term" value="F:RNA-DNA hybrid ribonuclease activity"/>
    <property type="evidence" value="ECO:0007669"/>
    <property type="project" value="UniProtKB-UniRule"/>
</dbReference>
<dbReference type="GO" id="GO:0043137">
    <property type="term" value="P:DNA replication, removal of RNA primer"/>
    <property type="evidence" value="ECO:0007669"/>
    <property type="project" value="TreeGrafter"/>
</dbReference>
<dbReference type="GO" id="GO:0006298">
    <property type="term" value="P:mismatch repair"/>
    <property type="evidence" value="ECO:0007669"/>
    <property type="project" value="TreeGrafter"/>
</dbReference>
<dbReference type="CDD" id="cd07182">
    <property type="entry name" value="RNase_HII_bacteria_HII_like"/>
    <property type="match status" value="1"/>
</dbReference>
<dbReference type="Gene3D" id="3.30.420.10">
    <property type="entry name" value="Ribonuclease H-like superfamily/Ribonuclease H"/>
    <property type="match status" value="1"/>
</dbReference>
<dbReference type="HAMAP" id="MF_00052_B">
    <property type="entry name" value="RNase_HII_B"/>
    <property type="match status" value="1"/>
</dbReference>
<dbReference type="InterPro" id="IPR022898">
    <property type="entry name" value="RNase_HII"/>
</dbReference>
<dbReference type="InterPro" id="IPR001352">
    <property type="entry name" value="RNase_HII/HIII"/>
</dbReference>
<dbReference type="InterPro" id="IPR024567">
    <property type="entry name" value="RNase_HII/HIII_dom"/>
</dbReference>
<dbReference type="InterPro" id="IPR012337">
    <property type="entry name" value="RNaseH-like_sf"/>
</dbReference>
<dbReference type="InterPro" id="IPR036397">
    <property type="entry name" value="RNaseH_sf"/>
</dbReference>
<dbReference type="NCBIfam" id="NF000595">
    <property type="entry name" value="PRK00015.1-3"/>
    <property type="match status" value="1"/>
</dbReference>
<dbReference type="PANTHER" id="PTHR10954">
    <property type="entry name" value="RIBONUCLEASE H2 SUBUNIT A"/>
    <property type="match status" value="1"/>
</dbReference>
<dbReference type="PANTHER" id="PTHR10954:SF18">
    <property type="entry name" value="RIBONUCLEASE HII"/>
    <property type="match status" value="1"/>
</dbReference>
<dbReference type="Pfam" id="PF01351">
    <property type="entry name" value="RNase_HII"/>
    <property type="match status" value="1"/>
</dbReference>
<dbReference type="SUPFAM" id="SSF53098">
    <property type="entry name" value="Ribonuclease H-like"/>
    <property type="match status" value="1"/>
</dbReference>
<dbReference type="PROSITE" id="PS51975">
    <property type="entry name" value="RNASE_H_2"/>
    <property type="match status" value="1"/>
</dbReference>
<gene>
    <name evidence="1" type="primary">rnhB</name>
    <name type="ordered locus">Rsph17025_0067</name>
</gene>
<organism>
    <name type="scientific">Cereibacter sphaeroides (strain ATCC 17025 / ATH 2.4.3)</name>
    <name type="common">Rhodobacter sphaeroides</name>
    <dbReference type="NCBI Taxonomy" id="349102"/>
    <lineage>
        <taxon>Bacteria</taxon>
        <taxon>Pseudomonadati</taxon>
        <taxon>Pseudomonadota</taxon>
        <taxon>Alphaproteobacteria</taxon>
        <taxon>Rhodobacterales</taxon>
        <taxon>Paracoccaceae</taxon>
        <taxon>Cereibacter</taxon>
    </lineage>
</organism>
<feature type="chain" id="PRO_1000031193" description="Ribonuclease HII">
    <location>
        <begin position="1"/>
        <end position="212"/>
    </location>
</feature>
<feature type="domain" description="RNase H type-2" evidence="2">
    <location>
        <begin position="20"/>
        <end position="209"/>
    </location>
</feature>
<feature type="binding site" evidence="1">
    <location>
        <position position="26"/>
    </location>
    <ligand>
        <name>a divalent metal cation</name>
        <dbReference type="ChEBI" id="CHEBI:60240"/>
    </ligand>
</feature>
<feature type="binding site" evidence="1">
    <location>
        <position position="27"/>
    </location>
    <ligand>
        <name>a divalent metal cation</name>
        <dbReference type="ChEBI" id="CHEBI:60240"/>
    </ligand>
</feature>
<feature type="binding site" evidence="1">
    <location>
        <position position="117"/>
    </location>
    <ligand>
        <name>a divalent metal cation</name>
        <dbReference type="ChEBI" id="CHEBI:60240"/>
    </ligand>
</feature>